<reference key="1">
    <citation type="journal article" date="2006" name="Appl. Environ. Microbiol.">
        <title>Genome sequence of the chemolithoautotrophic nitrite-oxidizing bacterium Nitrobacter winogradskyi Nb-255.</title>
        <authorList>
            <person name="Starkenburg S.R."/>
            <person name="Chain P.S.G."/>
            <person name="Sayavedra-Soto L.A."/>
            <person name="Hauser L."/>
            <person name="Land M.L."/>
            <person name="Larimer F.W."/>
            <person name="Malfatti S.A."/>
            <person name="Klotz M.G."/>
            <person name="Bottomley P.J."/>
            <person name="Arp D.J."/>
            <person name="Hickey W.J."/>
        </authorList>
    </citation>
    <scope>NUCLEOTIDE SEQUENCE [LARGE SCALE GENOMIC DNA]</scope>
    <source>
        <strain>ATCC 25391 / DSM 10237 / CIP 104748 / NCIMB 11846 / Nb-255</strain>
    </source>
</reference>
<proteinExistence type="inferred from homology"/>
<keyword id="KW-0067">ATP-binding</keyword>
<keyword id="KW-0315">Glutamine amidotransferase</keyword>
<keyword id="KW-0332">GMP biosynthesis</keyword>
<keyword id="KW-0436">Ligase</keyword>
<keyword id="KW-0547">Nucleotide-binding</keyword>
<keyword id="KW-0658">Purine biosynthesis</keyword>
<keyword id="KW-1185">Reference proteome</keyword>
<feature type="chain" id="PRO_0000229446" description="GMP synthase [glutamine-hydrolyzing]">
    <location>
        <begin position="1"/>
        <end position="535"/>
    </location>
</feature>
<feature type="domain" description="Glutamine amidotransferase type-1" evidence="1">
    <location>
        <begin position="24"/>
        <end position="217"/>
    </location>
</feature>
<feature type="domain" description="GMPS ATP-PPase" evidence="1">
    <location>
        <begin position="218"/>
        <end position="410"/>
    </location>
</feature>
<feature type="active site" description="Nucleophile" evidence="1">
    <location>
        <position position="101"/>
    </location>
</feature>
<feature type="active site" evidence="1">
    <location>
        <position position="191"/>
    </location>
</feature>
<feature type="active site" evidence="1">
    <location>
        <position position="193"/>
    </location>
</feature>
<feature type="binding site" evidence="1">
    <location>
        <begin position="245"/>
        <end position="251"/>
    </location>
    <ligand>
        <name>ATP</name>
        <dbReference type="ChEBI" id="CHEBI:30616"/>
    </ligand>
</feature>
<protein>
    <recommendedName>
        <fullName evidence="1">GMP synthase [glutamine-hydrolyzing]</fullName>
        <ecNumber evidence="1">6.3.5.2</ecNumber>
    </recommendedName>
    <alternativeName>
        <fullName evidence="1">GMP synthetase</fullName>
    </alternativeName>
    <alternativeName>
        <fullName evidence="1">Glutamine amidotransferase</fullName>
    </alternativeName>
</protein>
<gene>
    <name evidence="1" type="primary">guaA</name>
    <name type="ordered locus">Nwi_2143</name>
</gene>
<sequence>MTASSKPSASASDSSADGTSAHDKILIVDFGSQVTQLIARRVREEGVYSEIVPFQKAEAAFLAMKPKAVILSGGPASVLDRAAPAAPMAIFTAGVPVLGICYGEQTMAQQLGGTVEAGHHREFGRAAIEVIDACALFDGVWEKGGTYDVWMSHGDRVTKLPDGFRAVAKAPGSPIAVIADDARRFYAMQFHPEVVHTPDGAKLIRNFVRKVAGLTGDWTMRAFREEAVEKIRTQVGKGRVICGLSGGVDSSVAAILIHEAIGDQLTCVFVDHGMLRKDEGKTVVDLFRHHYNIPLIHVDASKKFLSELAGVTDPEAKRKTIGRLFIDVFEAEAKKIGGADFLAQGTLYPDVIESVSFTGGPSVTIKSHHNVGGLPDRMNMKLVEPLRELFKDEVRALGRELGLPEIFVGRHPFPGPGLAIRCPGEITNEKLDILREADAVYIDEIRKAGLYDNIWQAFAVLLPVKTVGVMGDSRTYDYVVGLRAVTSTDGMTADFYPFDAQFLGSTSTRIINEVKGVNRVVYDVTSKPPGTIEWE</sequence>
<accession>Q3SQP4</accession>
<organism>
    <name type="scientific">Nitrobacter winogradskyi (strain ATCC 25391 / DSM 10237 / CIP 104748 / NCIMB 11846 / Nb-255)</name>
    <dbReference type="NCBI Taxonomy" id="323098"/>
    <lineage>
        <taxon>Bacteria</taxon>
        <taxon>Pseudomonadati</taxon>
        <taxon>Pseudomonadota</taxon>
        <taxon>Alphaproteobacteria</taxon>
        <taxon>Hyphomicrobiales</taxon>
        <taxon>Nitrobacteraceae</taxon>
        <taxon>Nitrobacter</taxon>
    </lineage>
</organism>
<comment type="function">
    <text evidence="1">Catalyzes the synthesis of GMP from XMP.</text>
</comment>
<comment type="catalytic activity">
    <reaction evidence="1">
        <text>XMP + L-glutamine + ATP + H2O = GMP + L-glutamate + AMP + diphosphate + 2 H(+)</text>
        <dbReference type="Rhea" id="RHEA:11680"/>
        <dbReference type="ChEBI" id="CHEBI:15377"/>
        <dbReference type="ChEBI" id="CHEBI:15378"/>
        <dbReference type="ChEBI" id="CHEBI:29985"/>
        <dbReference type="ChEBI" id="CHEBI:30616"/>
        <dbReference type="ChEBI" id="CHEBI:33019"/>
        <dbReference type="ChEBI" id="CHEBI:57464"/>
        <dbReference type="ChEBI" id="CHEBI:58115"/>
        <dbReference type="ChEBI" id="CHEBI:58359"/>
        <dbReference type="ChEBI" id="CHEBI:456215"/>
        <dbReference type="EC" id="6.3.5.2"/>
    </reaction>
</comment>
<comment type="pathway">
    <text evidence="1">Purine metabolism; GMP biosynthesis; GMP from XMP (L-Gln route): step 1/1.</text>
</comment>
<comment type="subunit">
    <text evidence="1">Homodimer.</text>
</comment>
<name>GUAA_NITWN</name>
<evidence type="ECO:0000255" key="1">
    <source>
        <dbReference type="HAMAP-Rule" id="MF_00344"/>
    </source>
</evidence>
<dbReference type="EC" id="6.3.5.2" evidence="1"/>
<dbReference type="EMBL" id="CP000115">
    <property type="protein sequence ID" value="ABA05397.1"/>
    <property type="molecule type" value="Genomic_DNA"/>
</dbReference>
<dbReference type="RefSeq" id="WP_011315366.1">
    <property type="nucleotide sequence ID" value="NC_007406.1"/>
</dbReference>
<dbReference type="SMR" id="Q3SQP4"/>
<dbReference type="STRING" id="323098.Nwi_2143"/>
<dbReference type="KEGG" id="nwi:Nwi_2143"/>
<dbReference type="eggNOG" id="COG0518">
    <property type="taxonomic scope" value="Bacteria"/>
</dbReference>
<dbReference type="eggNOG" id="COG0519">
    <property type="taxonomic scope" value="Bacteria"/>
</dbReference>
<dbReference type="HOGENOM" id="CLU_014340_0_5_5"/>
<dbReference type="OrthoDB" id="9802219at2"/>
<dbReference type="UniPathway" id="UPA00189">
    <property type="reaction ID" value="UER00296"/>
</dbReference>
<dbReference type="Proteomes" id="UP000002531">
    <property type="component" value="Chromosome"/>
</dbReference>
<dbReference type="GO" id="GO:0005829">
    <property type="term" value="C:cytosol"/>
    <property type="evidence" value="ECO:0007669"/>
    <property type="project" value="TreeGrafter"/>
</dbReference>
<dbReference type="GO" id="GO:0005524">
    <property type="term" value="F:ATP binding"/>
    <property type="evidence" value="ECO:0007669"/>
    <property type="project" value="UniProtKB-UniRule"/>
</dbReference>
<dbReference type="GO" id="GO:0003921">
    <property type="term" value="F:GMP synthase activity"/>
    <property type="evidence" value="ECO:0007669"/>
    <property type="project" value="InterPro"/>
</dbReference>
<dbReference type="CDD" id="cd01742">
    <property type="entry name" value="GATase1_GMP_Synthase"/>
    <property type="match status" value="1"/>
</dbReference>
<dbReference type="CDD" id="cd01997">
    <property type="entry name" value="GMP_synthase_C"/>
    <property type="match status" value="1"/>
</dbReference>
<dbReference type="FunFam" id="3.30.300.10:FF:000002">
    <property type="entry name" value="GMP synthase [glutamine-hydrolyzing]"/>
    <property type="match status" value="1"/>
</dbReference>
<dbReference type="FunFam" id="3.40.50.620:FF:000001">
    <property type="entry name" value="GMP synthase [glutamine-hydrolyzing]"/>
    <property type="match status" value="1"/>
</dbReference>
<dbReference type="FunFam" id="3.40.50.880:FF:000001">
    <property type="entry name" value="GMP synthase [glutamine-hydrolyzing]"/>
    <property type="match status" value="1"/>
</dbReference>
<dbReference type="Gene3D" id="3.30.300.10">
    <property type="match status" value="1"/>
</dbReference>
<dbReference type="Gene3D" id="3.40.50.880">
    <property type="match status" value="1"/>
</dbReference>
<dbReference type="Gene3D" id="3.40.50.620">
    <property type="entry name" value="HUPs"/>
    <property type="match status" value="1"/>
</dbReference>
<dbReference type="HAMAP" id="MF_00344">
    <property type="entry name" value="GMP_synthase"/>
    <property type="match status" value="1"/>
</dbReference>
<dbReference type="InterPro" id="IPR029062">
    <property type="entry name" value="Class_I_gatase-like"/>
</dbReference>
<dbReference type="InterPro" id="IPR017926">
    <property type="entry name" value="GATASE"/>
</dbReference>
<dbReference type="InterPro" id="IPR001674">
    <property type="entry name" value="GMP_synth_C"/>
</dbReference>
<dbReference type="InterPro" id="IPR004739">
    <property type="entry name" value="GMP_synth_GATase"/>
</dbReference>
<dbReference type="InterPro" id="IPR022955">
    <property type="entry name" value="GMP_synthase"/>
</dbReference>
<dbReference type="InterPro" id="IPR025777">
    <property type="entry name" value="GMPS_ATP_PPase_dom"/>
</dbReference>
<dbReference type="InterPro" id="IPR022310">
    <property type="entry name" value="NAD/GMP_synthase"/>
</dbReference>
<dbReference type="InterPro" id="IPR014729">
    <property type="entry name" value="Rossmann-like_a/b/a_fold"/>
</dbReference>
<dbReference type="NCBIfam" id="TIGR00884">
    <property type="entry name" value="guaA_Cterm"/>
    <property type="match status" value="1"/>
</dbReference>
<dbReference type="NCBIfam" id="TIGR00888">
    <property type="entry name" value="guaA_Nterm"/>
    <property type="match status" value="1"/>
</dbReference>
<dbReference type="NCBIfam" id="NF000848">
    <property type="entry name" value="PRK00074.1"/>
    <property type="match status" value="1"/>
</dbReference>
<dbReference type="PANTHER" id="PTHR11922:SF2">
    <property type="entry name" value="GMP SYNTHASE [GLUTAMINE-HYDROLYZING]"/>
    <property type="match status" value="1"/>
</dbReference>
<dbReference type="PANTHER" id="PTHR11922">
    <property type="entry name" value="GMP SYNTHASE-RELATED"/>
    <property type="match status" value="1"/>
</dbReference>
<dbReference type="Pfam" id="PF00117">
    <property type="entry name" value="GATase"/>
    <property type="match status" value="1"/>
</dbReference>
<dbReference type="Pfam" id="PF00958">
    <property type="entry name" value="GMP_synt_C"/>
    <property type="match status" value="1"/>
</dbReference>
<dbReference type="Pfam" id="PF02540">
    <property type="entry name" value="NAD_synthase"/>
    <property type="match status" value="1"/>
</dbReference>
<dbReference type="PRINTS" id="PR00097">
    <property type="entry name" value="ANTSNTHASEII"/>
</dbReference>
<dbReference type="PRINTS" id="PR00096">
    <property type="entry name" value="GATASE"/>
</dbReference>
<dbReference type="SUPFAM" id="SSF52402">
    <property type="entry name" value="Adenine nucleotide alpha hydrolases-like"/>
    <property type="match status" value="1"/>
</dbReference>
<dbReference type="SUPFAM" id="SSF52317">
    <property type="entry name" value="Class I glutamine amidotransferase-like"/>
    <property type="match status" value="1"/>
</dbReference>
<dbReference type="SUPFAM" id="SSF54810">
    <property type="entry name" value="GMP synthetase C-terminal dimerisation domain"/>
    <property type="match status" value="1"/>
</dbReference>
<dbReference type="PROSITE" id="PS51273">
    <property type="entry name" value="GATASE_TYPE_1"/>
    <property type="match status" value="1"/>
</dbReference>
<dbReference type="PROSITE" id="PS51553">
    <property type="entry name" value="GMPS_ATP_PPASE"/>
    <property type="match status" value="1"/>
</dbReference>